<keyword id="KW-0148">Chlorophyll</keyword>
<keyword id="KW-0150">Chloroplast</keyword>
<keyword id="KW-0157">Chromophore</keyword>
<keyword id="KW-0460">Magnesium</keyword>
<keyword id="KW-0472">Membrane</keyword>
<keyword id="KW-0479">Metal-binding</keyword>
<keyword id="KW-0597">Phosphoprotein</keyword>
<keyword id="KW-0602">Photosynthesis</keyword>
<keyword id="KW-0603">Photosystem I</keyword>
<keyword id="KW-0604">Photosystem II</keyword>
<keyword id="KW-0934">Plastid</keyword>
<keyword id="KW-0793">Thylakoid</keyword>
<keyword id="KW-0809">Transit peptide</keyword>
<keyword id="KW-0812">Transmembrane</keyword>
<keyword id="KW-1133">Transmembrane helix</keyword>
<reference key="1">
    <citation type="journal article" date="1990" name="Gene">
        <title>Characterization of a cDNA encoding for the 28.5-kDa LHCII apoprotein from the unicellular marine chlorophyte, Dunaliella tertiolecta.</title>
        <authorList>
            <person name="Laroche J."/>
            <person name="Bennett J."/>
            <person name="Falkowski P.G."/>
        </authorList>
    </citation>
    <scope>NUCLEOTIDE SEQUENCE [MRNA]</scope>
</reference>
<protein>
    <recommendedName>
        <fullName>Chlorophyll a-b binding protein of LHCII type I, chloroplastic</fullName>
        <shortName>CAB</shortName>
        <shortName>LHCP</shortName>
    </recommendedName>
</protein>
<organism>
    <name type="scientific">Dunaliella tertiolecta</name>
    <name type="common">Green alga</name>
    <dbReference type="NCBI Taxonomy" id="3047"/>
    <lineage>
        <taxon>Eukaryota</taxon>
        <taxon>Viridiplantae</taxon>
        <taxon>Chlorophyta</taxon>
        <taxon>core chlorophytes</taxon>
        <taxon>Chlorophyceae</taxon>
        <taxon>CS clade</taxon>
        <taxon>Chlamydomonadales</taxon>
        <taxon>Dunaliellaceae</taxon>
        <taxon>Dunaliella</taxon>
    </lineage>
</organism>
<sequence>MAALIARSGLKALNIRQTRQQRMATVPRAAVEFYGPDRAKFLGPFSENDTPEYLTGEFPGDYGWDTAGLSADPQTFARYREIELIHARWALLGALGILTPELLSQYAGVQFGEPVWFKAGAQIFADGGLNYLGNESLIHAQSIIATLAVQVVLMGLAEAYRANGGSEGFLDDLDTLYPGGPFDPLGLADDPDTFAELKVKEIKNGRLAMFSCLGFFVQAIVTGKGPVQNLTDHLADPTVNKAFASATKFTPGV</sequence>
<name>CB2_DUNTE</name>
<feature type="transit peptide" description="Chloroplast">
    <location>
        <begin position="1"/>
        <end position="30"/>
    </location>
</feature>
<feature type="chain" id="PRO_0000003658" description="Chlorophyll a-b binding protein of LHCII type I, chloroplastic">
    <location>
        <begin position="31"/>
        <end position="253"/>
    </location>
</feature>
<feature type="transmembrane region" description="Helical" evidence="4">
    <location>
        <begin position="89"/>
        <end position="109"/>
    </location>
</feature>
<feature type="transmembrane region" description="Helical" evidence="4">
    <location>
        <begin position="137"/>
        <end position="157"/>
    </location>
</feature>
<feature type="transmembrane region" description="Helical" evidence="4">
    <location>
        <begin position="207"/>
        <end position="227"/>
    </location>
</feature>
<feature type="binding site" description="axial binding residue" evidence="1">
    <location>
        <position position="41"/>
    </location>
    <ligand>
        <name>chlorophyll b</name>
        <dbReference type="ChEBI" id="CHEBI:61721"/>
        <label>1</label>
    </ligand>
    <ligandPart>
        <name>Mg</name>
        <dbReference type="ChEBI" id="CHEBI:25107"/>
    </ligandPart>
</feature>
<feature type="binding site" evidence="1">
    <location>
        <position position="64"/>
    </location>
    <ligand>
        <name>chlorophyll a</name>
        <dbReference type="ChEBI" id="CHEBI:58416"/>
        <label>1</label>
    </ligand>
</feature>
<feature type="binding site" evidence="1">
    <location>
        <position position="70"/>
    </location>
    <ligand>
        <name>chlorophyll a</name>
        <dbReference type="ChEBI" id="CHEBI:58416"/>
        <label>1</label>
    </ligand>
</feature>
<feature type="binding site" description="axial binding residue" evidence="3">
    <location>
        <position position="83"/>
    </location>
    <ligand>
        <name>chlorophyll a</name>
        <dbReference type="ChEBI" id="CHEBI:58416"/>
        <label>1</label>
    </ligand>
    <ligandPart>
        <name>Mg</name>
        <dbReference type="ChEBI" id="CHEBI:25107"/>
    </ligandPart>
</feature>
<feature type="binding site" description="axial binding residue" evidence="3">
    <location>
        <position position="86"/>
    </location>
    <ligand>
        <name>chlorophyll a</name>
        <dbReference type="ChEBI" id="CHEBI:58416"/>
        <label>2</label>
    </ligand>
    <ligandPart>
        <name>Mg</name>
        <dbReference type="ChEBI" id="CHEBI:25107"/>
    </ligandPart>
</feature>
<feature type="binding site" evidence="1">
    <location>
        <position position="88"/>
    </location>
    <ligand>
        <name>chlorophyll b</name>
        <dbReference type="ChEBI" id="CHEBI:61721"/>
        <label>2</label>
    </ligand>
</feature>
<feature type="binding site" evidence="1">
    <location>
        <position position="122"/>
    </location>
    <ligand>
        <name>chlorophyll a</name>
        <dbReference type="ChEBI" id="CHEBI:58416"/>
        <label>3</label>
    </ligand>
</feature>
<feature type="binding site" evidence="1">
    <location>
        <position position="132"/>
    </location>
    <ligand>
        <name>chlorophyll a</name>
        <dbReference type="ChEBI" id="CHEBI:58416"/>
        <label>3</label>
    </ligand>
</feature>
<feature type="binding site" description="axial binding residue" evidence="1">
    <location>
        <position position="138"/>
    </location>
    <ligand>
        <name>chlorophyll b</name>
        <dbReference type="ChEBI" id="CHEBI:61721"/>
        <label>2</label>
    </ligand>
    <ligandPart>
        <name>Mg</name>
        <dbReference type="ChEBI" id="CHEBI:25107"/>
    </ligandPart>
</feature>
<feature type="binding site" evidence="1">
    <location>
        <position position="142"/>
    </location>
    <ligand>
        <name>chlorophyll b</name>
        <dbReference type="ChEBI" id="CHEBI:61721"/>
        <label>3</label>
    </ligand>
</feature>
<feature type="binding site" evidence="1">
    <location>
        <position position="150"/>
    </location>
    <ligand>
        <name>chlorophyll b</name>
        <dbReference type="ChEBI" id="CHEBI:61721"/>
        <label>4</label>
    </ligand>
</feature>
<feature type="binding site" evidence="2">
    <location>
        <position position="150"/>
    </location>
    <ligand>
        <name>chlorophyll b</name>
        <dbReference type="ChEBI" id="CHEBI:61721"/>
        <label>5</label>
    </ligand>
</feature>
<feature type="binding site" description="axial binding residue" evidence="3">
    <location>
        <position position="158"/>
    </location>
    <ligand>
        <name>chlorophyll b</name>
        <dbReference type="ChEBI" id="CHEBI:61721"/>
        <label>3</label>
    </ligand>
    <ligandPart>
        <name>Mg</name>
        <dbReference type="ChEBI" id="CHEBI:25107"/>
    </ligandPart>
</feature>
<feature type="binding site" evidence="1">
    <location>
        <position position="161"/>
    </location>
    <ligand>
        <name>chlorophyll b</name>
        <dbReference type="ChEBI" id="CHEBI:61721"/>
        <label>4</label>
    </ligand>
</feature>
<feature type="binding site" evidence="1">
    <location>
        <position position="200"/>
    </location>
    <ligand>
        <name>chlorophyll a</name>
        <dbReference type="ChEBI" id="CHEBI:58416"/>
        <label>5</label>
    </ligand>
</feature>
<feature type="binding site" description="axial binding residue" evidence="3">
    <location>
        <position position="201"/>
    </location>
    <ligand>
        <name>chlorophyll a</name>
        <dbReference type="ChEBI" id="CHEBI:58416"/>
        <label>3</label>
    </ligand>
    <ligandPart>
        <name>Mg</name>
        <dbReference type="ChEBI" id="CHEBI:25107"/>
    </ligandPart>
</feature>
<feature type="binding site" description="axial binding residue" evidence="3">
    <location>
        <position position="204"/>
    </location>
    <ligand>
        <name>chlorophyll a</name>
        <dbReference type="ChEBI" id="CHEBI:58416"/>
        <label>4</label>
    </ligand>
    <ligandPart>
        <name>Mg</name>
        <dbReference type="ChEBI" id="CHEBI:25107"/>
    </ligandPart>
</feature>
<feature type="binding site" evidence="1">
    <location>
        <position position="206"/>
    </location>
    <ligand>
        <name>chlorophyll a</name>
        <dbReference type="ChEBI" id="CHEBI:58416"/>
        <label>1</label>
    </ligand>
</feature>
<feature type="binding site" description="axial binding residue" evidence="3">
    <location>
        <position position="218"/>
    </location>
    <ligand>
        <name>chlorophyll a</name>
        <dbReference type="ChEBI" id="CHEBI:58416"/>
        <label>5</label>
    </ligand>
    <ligandPart>
        <name>Mg</name>
        <dbReference type="ChEBI" id="CHEBI:25107"/>
    </ligandPart>
</feature>
<feature type="binding site" description="axial binding residue" evidence="3">
    <location>
        <position position="233"/>
    </location>
    <ligand>
        <name>chlorophyll a</name>
        <dbReference type="ChEBI" id="CHEBI:58416"/>
        <label>6</label>
    </ligand>
    <ligandPart>
        <name>Mg</name>
        <dbReference type="ChEBI" id="CHEBI:25107"/>
    </ligandPart>
</feature>
<feature type="binding site" evidence="1">
    <location>
        <position position="242"/>
    </location>
    <ligand>
        <name>chlorophyll a</name>
        <dbReference type="ChEBI" id="CHEBI:58416"/>
        <label>6</label>
    </ligand>
</feature>
<feature type="binding site" evidence="1">
    <location>
        <position position="249"/>
    </location>
    <ligand>
        <name>chlorophyll b</name>
        <dbReference type="ChEBI" id="CHEBI:61721"/>
        <label>5</label>
    </ligand>
</feature>
<evidence type="ECO:0000250" key="1"/>
<evidence type="ECO:0000250" key="2">
    <source>
        <dbReference type="UniProtKB" id="P07371"/>
    </source>
</evidence>
<evidence type="ECO:0000250" key="3">
    <source>
        <dbReference type="UniProtKB" id="P12333"/>
    </source>
</evidence>
<evidence type="ECO:0000255" key="4"/>
<evidence type="ECO:0000305" key="5"/>
<proteinExistence type="evidence at transcript level"/>
<accession>P27517</accession>
<comment type="function">
    <text>The light-harvesting complex (LHC) functions as a light receptor, it captures and delivers excitation energy to photosystems with which it is closely associated.</text>
</comment>
<comment type="cofactor">
    <text evidence="1">Binds at least 14 chlorophylls (8 Chl-a and 6 Chl-b) and carotenoids such as lutein and neoxanthin.</text>
</comment>
<comment type="subunit">
    <text>The LHC complex consists of chlorophyll a-b binding proteins.</text>
</comment>
<comment type="subcellular location">
    <subcellularLocation>
        <location>Plastid</location>
        <location>Chloroplast thylakoid membrane</location>
        <topology>Multi-pass membrane protein</topology>
    </subcellularLocation>
</comment>
<comment type="domain">
    <text>The N-terminus of the protein extends into the stroma where it is involved with adhesion of granal membranes and post-translational modifications; both are believed to mediate the distribution of excitation energy between photosystems I and II.</text>
</comment>
<comment type="PTM">
    <text evidence="1">Photoregulated by reversible phosphorylation of its threonine residues.</text>
</comment>
<comment type="similarity">
    <text evidence="5">Belongs to the light-harvesting chlorophyll a/b-binding (LHC) protein family.</text>
</comment>
<dbReference type="EMBL" id="M60049">
    <property type="protein sequence ID" value="AAA62772.1"/>
    <property type="molecule type" value="mRNA"/>
</dbReference>
<dbReference type="PIR" id="JW0040">
    <property type="entry name" value="JW0040"/>
</dbReference>
<dbReference type="SMR" id="P27517"/>
<dbReference type="GO" id="GO:0009535">
    <property type="term" value="C:chloroplast thylakoid membrane"/>
    <property type="evidence" value="ECO:0007669"/>
    <property type="project" value="UniProtKB-SubCell"/>
</dbReference>
<dbReference type="GO" id="GO:0009522">
    <property type="term" value="C:photosystem I"/>
    <property type="evidence" value="ECO:0007669"/>
    <property type="project" value="UniProtKB-KW"/>
</dbReference>
<dbReference type="GO" id="GO:0009523">
    <property type="term" value="C:photosystem II"/>
    <property type="evidence" value="ECO:0007669"/>
    <property type="project" value="UniProtKB-KW"/>
</dbReference>
<dbReference type="GO" id="GO:0016168">
    <property type="term" value="F:chlorophyll binding"/>
    <property type="evidence" value="ECO:0007669"/>
    <property type="project" value="UniProtKB-KW"/>
</dbReference>
<dbReference type="GO" id="GO:0046872">
    <property type="term" value="F:metal ion binding"/>
    <property type="evidence" value="ECO:0007669"/>
    <property type="project" value="UniProtKB-KW"/>
</dbReference>
<dbReference type="GO" id="GO:0009765">
    <property type="term" value="P:photosynthesis, light harvesting"/>
    <property type="evidence" value="ECO:0007669"/>
    <property type="project" value="InterPro"/>
</dbReference>
<dbReference type="Gene3D" id="1.10.3460.10">
    <property type="entry name" value="Chlorophyll a/b binding protein domain"/>
    <property type="match status" value="1"/>
</dbReference>
<dbReference type="InterPro" id="IPR001344">
    <property type="entry name" value="Chloro_AB-bd_pln"/>
</dbReference>
<dbReference type="InterPro" id="IPR022796">
    <property type="entry name" value="Chloroa_b-bind"/>
</dbReference>
<dbReference type="PANTHER" id="PTHR21649">
    <property type="entry name" value="CHLOROPHYLL A/B BINDING PROTEIN"/>
    <property type="match status" value="1"/>
</dbReference>
<dbReference type="Pfam" id="PF00504">
    <property type="entry name" value="Chloroa_b-bind"/>
    <property type="match status" value="1"/>
</dbReference>
<dbReference type="SUPFAM" id="SSF103511">
    <property type="entry name" value="Chlorophyll a-b binding protein"/>
    <property type="match status" value="1"/>
</dbReference>